<organism>
    <name type="scientific">Staphylococcus aureus (strain MW2)</name>
    <dbReference type="NCBI Taxonomy" id="196620"/>
    <lineage>
        <taxon>Bacteria</taxon>
        <taxon>Bacillati</taxon>
        <taxon>Bacillota</taxon>
        <taxon>Bacilli</taxon>
        <taxon>Bacillales</taxon>
        <taxon>Staphylococcaceae</taxon>
        <taxon>Staphylococcus</taxon>
    </lineage>
</organism>
<proteinExistence type="evidence at protein level"/>
<dbReference type="EMBL" id="BA000033">
    <property type="protein sequence ID" value="BAB96011.1"/>
    <property type="molecule type" value="Genomic_DNA"/>
</dbReference>
<dbReference type="RefSeq" id="WP_000868342.1">
    <property type="nucleotide sequence ID" value="NC_003923.1"/>
</dbReference>
<dbReference type="PDB" id="8Y36">
    <property type="method" value="EM"/>
    <property type="resolution" value="2.65 A"/>
    <property type="chains" value="4=1-37"/>
</dbReference>
<dbReference type="PDB" id="8Y37">
    <property type="method" value="EM"/>
    <property type="resolution" value="2.53 A"/>
    <property type="chains" value="4=1-37"/>
</dbReference>
<dbReference type="PDB" id="8Y38">
    <property type="method" value="EM"/>
    <property type="resolution" value="2.58 A"/>
    <property type="chains" value="4=1-37"/>
</dbReference>
<dbReference type="PDB" id="8Y39">
    <property type="method" value="EM"/>
    <property type="resolution" value="3.60 A"/>
    <property type="chains" value="4=1-37"/>
</dbReference>
<dbReference type="PDBsum" id="8Y36"/>
<dbReference type="PDBsum" id="8Y37"/>
<dbReference type="PDBsum" id="8Y38"/>
<dbReference type="PDBsum" id="8Y39"/>
<dbReference type="EMDB" id="EMD-38873"/>
<dbReference type="EMDB" id="EMD-38874"/>
<dbReference type="EMDB" id="EMD-38875"/>
<dbReference type="EMDB" id="EMD-38876"/>
<dbReference type="SMR" id="P66300"/>
<dbReference type="GeneID" id="98346539"/>
<dbReference type="KEGG" id="sam:MW2146"/>
<dbReference type="HOGENOM" id="CLU_135723_6_2_9"/>
<dbReference type="GO" id="GO:0005737">
    <property type="term" value="C:cytoplasm"/>
    <property type="evidence" value="ECO:0007669"/>
    <property type="project" value="UniProtKB-ARBA"/>
</dbReference>
<dbReference type="GO" id="GO:1990904">
    <property type="term" value="C:ribonucleoprotein complex"/>
    <property type="evidence" value="ECO:0007669"/>
    <property type="project" value="UniProtKB-KW"/>
</dbReference>
<dbReference type="GO" id="GO:0005840">
    <property type="term" value="C:ribosome"/>
    <property type="evidence" value="ECO:0007669"/>
    <property type="project" value="UniProtKB-KW"/>
</dbReference>
<dbReference type="GO" id="GO:0003735">
    <property type="term" value="F:structural constituent of ribosome"/>
    <property type="evidence" value="ECO:0007669"/>
    <property type="project" value="InterPro"/>
</dbReference>
<dbReference type="GO" id="GO:0006412">
    <property type="term" value="P:translation"/>
    <property type="evidence" value="ECO:0007669"/>
    <property type="project" value="UniProtKB-UniRule"/>
</dbReference>
<dbReference type="HAMAP" id="MF_00251">
    <property type="entry name" value="Ribosomal_bL36"/>
    <property type="match status" value="1"/>
</dbReference>
<dbReference type="InterPro" id="IPR000473">
    <property type="entry name" value="Ribosomal_bL36"/>
</dbReference>
<dbReference type="InterPro" id="IPR035977">
    <property type="entry name" value="Ribosomal_bL36_sp"/>
</dbReference>
<dbReference type="NCBIfam" id="TIGR01022">
    <property type="entry name" value="rpmJ_bact"/>
    <property type="match status" value="1"/>
</dbReference>
<dbReference type="PANTHER" id="PTHR42888">
    <property type="entry name" value="50S RIBOSOMAL PROTEIN L36, CHLOROPLASTIC"/>
    <property type="match status" value="1"/>
</dbReference>
<dbReference type="PANTHER" id="PTHR42888:SF1">
    <property type="entry name" value="LARGE RIBOSOMAL SUBUNIT PROTEIN BL36C"/>
    <property type="match status" value="1"/>
</dbReference>
<dbReference type="Pfam" id="PF00444">
    <property type="entry name" value="Ribosomal_L36"/>
    <property type="match status" value="1"/>
</dbReference>
<dbReference type="SUPFAM" id="SSF57840">
    <property type="entry name" value="Ribosomal protein L36"/>
    <property type="match status" value="1"/>
</dbReference>
<dbReference type="PROSITE" id="PS00828">
    <property type="entry name" value="RIBOSOMAL_L36"/>
    <property type="match status" value="1"/>
</dbReference>
<comment type="similarity">
    <text evidence="1">Belongs to the bacterial ribosomal protein bL36 family.</text>
</comment>
<name>RL36_STAAW</name>
<feature type="chain" id="PRO_0000126262" description="Large ribosomal subunit protein bL36">
    <location>
        <begin position="1"/>
        <end position="37"/>
    </location>
</feature>
<reference key="1">
    <citation type="journal article" date="2002" name="Lancet">
        <title>Genome and virulence determinants of high virulence community-acquired MRSA.</title>
        <authorList>
            <person name="Baba T."/>
            <person name="Takeuchi F."/>
            <person name="Kuroda M."/>
            <person name="Yuzawa H."/>
            <person name="Aoki K."/>
            <person name="Oguchi A."/>
            <person name="Nagai Y."/>
            <person name="Iwama N."/>
            <person name="Asano K."/>
            <person name="Naimi T."/>
            <person name="Kuroda H."/>
            <person name="Cui L."/>
            <person name="Yamamoto K."/>
            <person name="Hiramatsu K."/>
        </authorList>
    </citation>
    <scope>NUCLEOTIDE SEQUENCE [LARGE SCALE GENOMIC DNA]</scope>
    <source>
        <strain>MW2</strain>
    </source>
</reference>
<protein>
    <recommendedName>
        <fullName evidence="1">Large ribosomal subunit protein bL36</fullName>
    </recommendedName>
    <alternativeName>
        <fullName evidence="2">50S ribosomal protein L36</fullName>
    </alternativeName>
</protein>
<sequence length="37" mass="4305">MKVRPSVKPICEKCKVIKRKGKVMVICENPKHKQRQG</sequence>
<gene>
    <name evidence="1" type="primary">rpmJ</name>
    <name type="ordered locus">MW2146</name>
</gene>
<keyword id="KW-0002">3D-structure</keyword>
<keyword id="KW-0687">Ribonucleoprotein</keyword>
<keyword id="KW-0689">Ribosomal protein</keyword>
<evidence type="ECO:0000255" key="1">
    <source>
        <dbReference type="HAMAP-Rule" id="MF_00251"/>
    </source>
</evidence>
<evidence type="ECO:0000305" key="2"/>
<accession>P66300</accession>
<accession>Q99S42</accession>